<comment type="function">
    <text>May be involved in transcriptional regulation.</text>
</comment>
<comment type="subcellular location">
    <subcellularLocation>
        <location evidence="3">Nucleus</location>
    </subcellularLocation>
</comment>
<comment type="similarity">
    <text evidence="3">Belongs to the krueppel C2H2-type zinc-finger protein family.</text>
</comment>
<reference key="1">
    <citation type="submission" date="2004-11" db="EMBL/GenBank/DDBJ databases">
        <authorList>
            <consortium name="The German cDNA consortium"/>
        </authorList>
    </citation>
    <scope>NUCLEOTIDE SEQUENCE [LARGE SCALE MRNA]</scope>
    <source>
        <tissue>Kidney</tissue>
    </source>
</reference>
<dbReference type="EMBL" id="CR857438">
    <property type="protein sequence ID" value="CAH89729.1"/>
    <property type="molecule type" value="mRNA"/>
</dbReference>
<dbReference type="RefSeq" id="NP_001124788.1">
    <property type="nucleotide sequence ID" value="NM_001131316.1"/>
</dbReference>
<dbReference type="SMR" id="Q5RES8"/>
<dbReference type="GeneID" id="100171641"/>
<dbReference type="KEGG" id="pon:100171641"/>
<dbReference type="CTD" id="55713"/>
<dbReference type="eggNOG" id="KOG1721">
    <property type="taxonomic scope" value="Eukaryota"/>
</dbReference>
<dbReference type="InParanoid" id="Q5RES8"/>
<dbReference type="OrthoDB" id="6077919at2759"/>
<dbReference type="Proteomes" id="UP000001595">
    <property type="component" value="Unplaced"/>
</dbReference>
<dbReference type="GO" id="GO:0005634">
    <property type="term" value="C:nucleus"/>
    <property type="evidence" value="ECO:0007669"/>
    <property type="project" value="UniProtKB-SubCell"/>
</dbReference>
<dbReference type="GO" id="GO:0003700">
    <property type="term" value="F:DNA-binding transcription factor activity"/>
    <property type="evidence" value="ECO:0007669"/>
    <property type="project" value="TreeGrafter"/>
</dbReference>
<dbReference type="GO" id="GO:0000978">
    <property type="term" value="F:RNA polymerase II cis-regulatory region sequence-specific DNA binding"/>
    <property type="evidence" value="ECO:0007669"/>
    <property type="project" value="TreeGrafter"/>
</dbReference>
<dbReference type="GO" id="GO:0008270">
    <property type="term" value="F:zinc ion binding"/>
    <property type="evidence" value="ECO:0007669"/>
    <property type="project" value="UniProtKB-KW"/>
</dbReference>
<dbReference type="GO" id="GO:0006357">
    <property type="term" value="P:regulation of transcription by RNA polymerase II"/>
    <property type="evidence" value="ECO:0007669"/>
    <property type="project" value="TreeGrafter"/>
</dbReference>
<dbReference type="CDD" id="cd07765">
    <property type="entry name" value="KRAB_A-box"/>
    <property type="match status" value="1"/>
</dbReference>
<dbReference type="FunFam" id="3.30.160.60:FF:000295">
    <property type="entry name" value="zinc finger protein 19"/>
    <property type="match status" value="2"/>
</dbReference>
<dbReference type="FunFam" id="3.30.160.60:FF:000250">
    <property type="entry name" value="zinc finger protein 197 isoform X1"/>
    <property type="match status" value="1"/>
</dbReference>
<dbReference type="FunFam" id="3.30.160.60:FF:001543">
    <property type="entry name" value="Zinc finger protein 334"/>
    <property type="match status" value="1"/>
</dbReference>
<dbReference type="FunFam" id="3.30.160.60:FF:002253">
    <property type="entry name" value="Zinc finger protein 334"/>
    <property type="match status" value="1"/>
</dbReference>
<dbReference type="FunFam" id="3.30.160.60:FF:001355">
    <property type="entry name" value="zinc finger protein 334"/>
    <property type="match status" value="1"/>
</dbReference>
<dbReference type="FunFam" id="3.30.160.60:FF:002343">
    <property type="entry name" value="Zinc finger protein 33A"/>
    <property type="match status" value="1"/>
</dbReference>
<dbReference type="FunFam" id="3.30.160.60:FF:000135">
    <property type="entry name" value="Zinc finger protein 358"/>
    <property type="match status" value="1"/>
</dbReference>
<dbReference type="FunFam" id="3.30.160.60:FF:001498">
    <property type="entry name" value="Zinc finger protein 404"/>
    <property type="match status" value="1"/>
</dbReference>
<dbReference type="FunFam" id="3.30.160.60:FF:000060">
    <property type="entry name" value="zinc finger protein 436"/>
    <property type="match status" value="3"/>
</dbReference>
<dbReference type="FunFam" id="3.30.160.60:FF:001462">
    <property type="entry name" value="Zinc finger protein 502, isoform CRA_a"/>
    <property type="match status" value="2"/>
</dbReference>
<dbReference type="Gene3D" id="6.10.140.140">
    <property type="match status" value="1"/>
</dbReference>
<dbReference type="Gene3D" id="3.30.160.60">
    <property type="entry name" value="Classic Zinc Finger"/>
    <property type="match status" value="15"/>
</dbReference>
<dbReference type="InterPro" id="IPR001909">
    <property type="entry name" value="KRAB"/>
</dbReference>
<dbReference type="InterPro" id="IPR036051">
    <property type="entry name" value="KRAB_dom_sf"/>
</dbReference>
<dbReference type="InterPro" id="IPR036236">
    <property type="entry name" value="Znf_C2H2_sf"/>
</dbReference>
<dbReference type="InterPro" id="IPR013087">
    <property type="entry name" value="Znf_C2H2_type"/>
</dbReference>
<dbReference type="PANTHER" id="PTHR24390">
    <property type="entry name" value="ZINC FINGER PROTEIN"/>
    <property type="match status" value="1"/>
</dbReference>
<dbReference type="PANTHER" id="PTHR24390:SF264">
    <property type="entry name" value="ZINC FINGER PROTEIN ZFP2"/>
    <property type="match status" value="1"/>
</dbReference>
<dbReference type="Pfam" id="PF01352">
    <property type="entry name" value="KRAB"/>
    <property type="match status" value="1"/>
</dbReference>
<dbReference type="Pfam" id="PF00096">
    <property type="entry name" value="zf-C2H2"/>
    <property type="match status" value="12"/>
</dbReference>
<dbReference type="Pfam" id="PF13912">
    <property type="entry name" value="zf-C2H2_6"/>
    <property type="match status" value="1"/>
</dbReference>
<dbReference type="SMART" id="SM00349">
    <property type="entry name" value="KRAB"/>
    <property type="match status" value="1"/>
</dbReference>
<dbReference type="SMART" id="SM00355">
    <property type="entry name" value="ZnF_C2H2"/>
    <property type="match status" value="14"/>
</dbReference>
<dbReference type="SUPFAM" id="SSF57667">
    <property type="entry name" value="beta-beta-alpha zinc fingers"/>
    <property type="match status" value="10"/>
</dbReference>
<dbReference type="SUPFAM" id="SSF109640">
    <property type="entry name" value="KRAB domain (Kruppel-associated box)"/>
    <property type="match status" value="1"/>
</dbReference>
<dbReference type="PROSITE" id="PS50805">
    <property type="entry name" value="KRAB"/>
    <property type="match status" value="1"/>
</dbReference>
<dbReference type="PROSITE" id="PS00028">
    <property type="entry name" value="ZINC_FINGER_C2H2_1"/>
    <property type="match status" value="12"/>
</dbReference>
<dbReference type="PROSITE" id="PS50157">
    <property type="entry name" value="ZINC_FINGER_C2H2_2"/>
    <property type="match status" value="14"/>
</dbReference>
<feature type="chain" id="PRO_0000290355" description="Zinc finger protein 334">
    <location>
        <begin position="1"/>
        <end position="678"/>
    </location>
</feature>
<feature type="domain" description="KRAB" evidence="2">
    <location>
        <begin position="8"/>
        <end position="79"/>
    </location>
</feature>
<feature type="zinc finger region" description="C2H2-type 1" evidence="1">
    <location>
        <begin position="235"/>
        <end position="257"/>
    </location>
</feature>
<feature type="zinc finger region" description="C2H2-type 2" evidence="1">
    <location>
        <begin position="263"/>
        <end position="285"/>
    </location>
</feature>
<feature type="zinc finger region" description="C2H2-type 3" evidence="1">
    <location>
        <begin position="291"/>
        <end position="313"/>
    </location>
</feature>
<feature type="zinc finger region" description="C2H2-type 4" evidence="1">
    <location>
        <begin position="319"/>
        <end position="341"/>
    </location>
</feature>
<feature type="zinc finger region" description="C2H2-type 5" evidence="1">
    <location>
        <begin position="347"/>
        <end position="369"/>
    </location>
</feature>
<feature type="zinc finger region" description="C2H2-type 6" evidence="1">
    <location>
        <begin position="375"/>
        <end position="397"/>
    </location>
</feature>
<feature type="zinc finger region" description="C2H2-type 7" evidence="1">
    <location>
        <begin position="403"/>
        <end position="425"/>
    </location>
</feature>
<feature type="zinc finger region" description="C2H2-type 8" evidence="1">
    <location>
        <begin position="431"/>
        <end position="453"/>
    </location>
</feature>
<feature type="zinc finger region" description="C2H2-type 9" evidence="1">
    <location>
        <begin position="459"/>
        <end position="481"/>
    </location>
</feature>
<feature type="zinc finger region" description="C2H2-type 10" evidence="1">
    <location>
        <begin position="542"/>
        <end position="564"/>
    </location>
</feature>
<feature type="zinc finger region" description="C2H2-type 11" evidence="1">
    <location>
        <begin position="570"/>
        <end position="592"/>
    </location>
</feature>
<feature type="zinc finger region" description="C2H2-type 12" evidence="1">
    <location>
        <begin position="598"/>
        <end position="620"/>
    </location>
</feature>
<feature type="zinc finger region" description="C2H2-type 13" evidence="1">
    <location>
        <begin position="626"/>
        <end position="648"/>
    </location>
</feature>
<feature type="zinc finger region" description="C2H2-type 14" evidence="1">
    <location>
        <begin position="654"/>
        <end position="676"/>
    </location>
</feature>
<gene>
    <name type="primary">ZNF334</name>
</gene>
<keyword id="KW-0238">DNA-binding</keyword>
<keyword id="KW-0479">Metal-binding</keyword>
<keyword id="KW-0539">Nucleus</keyword>
<keyword id="KW-1185">Reference proteome</keyword>
<keyword id="KW-0677">Repeat</keyword>
<keyword id="KW-0804">Transcription</keyword>
<keyword id="KW-0805">Transcription regulation</keyword>
<keyword id="KW-0862">Zinc</keyword>
<keyword id="KW-0863">Zinc-finger</keyword>
<organism>
    <name type="scientific">Pongo abelii</name>
    <name type="common">Sumatran orangutan</name>
    <name type="synonym">Pongo pygmaeus abelii</name>
    <dbReference type="NCBI Taxonomy" id="9601"/>
    <lineage>
        <taxon>Eukaryota</taxon>
        <taxon>Metazoa</taxon>
        <taxon>Chordata</taxon>
        <taxon>Craniata</taxon>
        <taxon>Vertebrata</taxon>
        <taxon>Euteleostomi</taxon>
        <taxon>Mammalia</taxon>
        <taxon>Eutheria</taxon>
        <taxon>Euarchontoglires</taxon>
        <taxon>Primates</taxon>
        <taxon>Haplorrhini</taxon>
        <taxon>Catarrhini</taxon>
        <taxon>Hominidae</taxon>
        <taxon>Pongo</taxon>
    </lineage>
</organism>
<protein>
    <recommendedName>
        <fullName>Zinc finger protein 334</fullName>
    </recommendedName>
</protein>
<sequence>MKKFQRPVSFQDLTVNFTQEEWQQLDPTQRLLYRDVMLENYSNLVSVGYHVSKPDVIFKLEQGEAPWIVEEFSNQNYPEVDDALEKNKEIQDKHLTQTVFFSNKTLITERENVFGKTLNLDMNSVPSRKMPYKCNPGGNSLKTNSEVIVAKKSKENRKIPDEYSGFGKHEKSHSGMNKYRCNPMRKASNQNENLILHQNIQILKQPFDYNKCRKTFFKRAILVTQKGRQTERKPNEPCECRKTFSKRSTLVVHQRIHTGEKPYVCNDCRKTFRVKTSLTRHQRIHTGERPYECSECGKTFIDKSALIVHQKIHGGEKSYECNECGKTFFRKSALAEHFRSHTGEKPYECKECGNAFSKKSYLVVHQRTHRGEKPNECKECGKTFFCQSALTAHQRIHTGEKPYECSECEKTFFCQSALNVHRRSHTGEKPYECSQCGKFLCTKSALIAHQITHRGKKSYECNECGKFFCHKSTLTIHQRTHTGEKHDVFNKCGRISIMKSNCSQCKRMNTKENFYECSEHGHAISKNSHLVVHQRTIWERPYECNECGRTYCRKSALTHHQRTHTGERPYECNECGKTFCQKFSFVEHQRTHTGEKPYERNECGKSFCHKSAFRVHRRIHTGEKPYECNQCGKTYRRLWTLTEHQKIHTGEKPYECNKCEKTFRHKSNFLLHQKSHKE</sequence>
<evidence type="ECO:0000255" key="1">
    <source>
        <dbReference type="PROSITE-ProRule" id="PRU00042"/>
    </source>
</evidence>
<evidence type="ECO:0000255" key="2">
    <source>
        <dbReference type="PROSITE-ProRule" id="PRU00119"/>
    </source>
</evidence>
<evidence type="ECO:0000305" key="3"/>
<proteinExistence type="evidence at transcript level"/>
<accession>Q5RES8</accession>
<name>ZN334_PONAB</name>